<feature type="chain" id="PRO_1000099557" description="UvrABC system protein B">
    <location>
        <begin position="1"/>
        <end position="658"/>
    </location>
</feature>
<feature type="domain" description="Helicase ATP-binding" evidence="1">
    <location>
        <begin position="25"/>
        <end position="182"/>
    </location>
</feature>
<feature type="domain" description="Helicase C-terminal" evidence="1">
    <location>
        <begin position="429"/>
        <end position="595"/>
    </location>
</feature>
<feature type="domain" description="UVR" evidence="1">
    <location>
        <begin position="622"/>
        <end position="657"/>
    </location>
</feature>
<feature type="short sequence motif" description="Beta-hairpin">
    <location>
        <begin position="91"/>
        <end position="114"/>
    </location>
</feature>
<feature type="binding site" evidence="1">
    <location>
        <begin position="38"/>
        <end position="45"/>
    </location>
    <ligand>
        <name>ATP</name>
        <dbReference type="ChEBI" id="CHEBI:30616"/>
    </ligand>
</feature>
<reference key="1">
    <citation type="submission" date="2008-04" db="EMBL/GenBank/DDBJ databases">
        <title>Complete sequence of chromosome of Natranaerobius thermophilus JW/NM-WN-LF.</title>
        <authorList>
            <consortium name="US DOE Joint Genome Institute"/>
            <person name="Copeland A."/>
            <person name="Lucas S."/>
            <person name="Lapidus A."/>
            <person name="Glavina del Rio T."/>
            <person name="Dalin E."/>
            <person name="Tice H."/>
            <person name="Bruce D."/>
            <person name="Goodwin L."/>
            <person name="Pitluck S."/>
            <person name="Chertkov O."/>
            <person name="Brettin T."/>
            <person name="Detter J.C."/>
            <person name="Han C."/>
            <person name="Kuske C.R."/>
            <person name="Schmutz J."/>
            <person name="Larimer F."/>
            <person name="Land M."/>
            <person name="Hauser L."/>
            <person name="Kyrpides N."/>
            <person name="Lykidis A."/>
            <person name="Mesbah N.M."/>
            <person name="Wiegel J."/>
        </authorList>
    </citation>
    <scope>NUCLEOTIDE SEQUENCE [LARGE SCALE GENOMIC DNA]</scope>
    <source>
        <strain>ATCC BAA-1301 / DSM 18059 / JW/NM-WN-LF</strain>
    </source>
</reference>
<sequence length="658" mass="75789">MNEFKLQSDFSLEGDQPKAVDELCESLNGGNSHQTLLGVTGSGKTFTMANVIQRLQRPTLVIAHNKTLAAQLCGEFKEFFPENAVEYFVSYYDYYQPEAYIPQTDTYIEKDASINDEIDKLRHSATSALFERRDVIIVASVSCIYGLGSPEEYREQVLSLRCGMEKDRDEILKGLVDIQYSRNDVNFTRGTFRVRGDVIEVFPASYTETAVRIELFGDEIERITEIDTLTGEILGERNHVAIFPASHFVTRRSKLEKAIESIQEELHEQLEYLKRQGKAVEAKRLEQRTNYDLEMLQEMGFCQGIENYSRHLIGRPAGSRPYCLIDYFPDDYLMVVDESHMTIPQIRGMYAGDMSRKQNLVDHGFRLPSALDNRPLKFQEFEKMINQNIYVSATPGPYEKEHSERIVEQIIRPTGLVDPETEVRPVKGQIDDLYSEINKRTDRNERVLVTTLTKKMAEDLTDYLREMGIRVRYMHSEIDTLERMEIIRDLRLGKFDVLVGINLLREGLDLPEVSLVAILDADKEGYLRDERSLIQTMGRAARNVNGRVIMYGDAITDSMRRAIDETNRRREKQIEFNARHNITPQTVQKKVHDVIEATRSAEDETEAATPENIQEMSAKERKELIAKLQEEMKQAAKELEFEKAAELRDLIMELKTAQ</sequence>
<keyword id="KW-0067">ATP-binding</keyword>
<keyword id="KW-0963">Cytoplasm</keyword>
<keyword id="KW-0227">DNA damage</keyword>
<keyword id="KW-0228">DNA excision</keyword>
<keyword id="KW-0234">DNA repair</keyword>
<keyword id="KW-0267">Excision nuclease</keyword>
<keyword id="KW-0347">Helicase</keyword>
<keyword id="KW-0378">Hydrolase</keyword>
<keyword id="KW-0547">Nucleotide-binding</keyword>
<keyword id="KW-1185">Reference proteome</keyword>
<keyword id="KW-0742">SOS response</keyword>
<comment type="function">
    <text evidence="1">The UvrABC repair system catalyzes the recognition and processing of DNA lesions. A damage recognition complex composed of 2 UvrA and 2 UvrB subunits scans DNA for abnormalities. Upon binding of the UvrA(2)B(2) complex to a putative damaged site, the DNA wraps around one UvrB monomer. DNA wrap is dependent on ATP binding by UvrB and probably causes local melting of the DNA helix, facilitating insertion of UvrB beta-hairpin between the DNA strands. Then UvrB probes one DNA strand for the presence of a lesion. If a lesion is found the UvrA subunits dissociate and the UvrB-DNA preincision complex is formed. This complex is subsequently bound by UvrC and the second UvrB is released. If no lesion is found, the DNA wraps around the other UvrB subunit that will check the other stand for damage.</text>
</comment>
<comment type="subunit">
    <text evidence="1">Forms a heterotetramer with UvrA during the search for lesions. Interacts with UvrC in an incision complex.</text>
</comment>
<comment type="subcellular location">
    <subcellularLocation>
        <location evidence="1">Cytoplasm</location>
    </subcellularLocation>
</comment>
<comment type="domain">
    <text evidence="1">The beta-hairpin motif is involved in DNA binding.</text>
</comment>
<comment type="similarity">
    <text evidence="1">Belongs to the UvrB family.</text>
</comment>
<evidence type="ECO:0000255" key="1">
    <source>
        <dbReference type="HAMAP-Rule" id="MF_00204"/>
    </source>
</evidence>
<proteinExistence type="inferred from homology"/>
<accession>B2A713</accession>
<protein>
    <recommendedName>
        <fullName evidence="1">UvrABC system protein B</fullName>
        <shortName evidence="1">Protein UvrB</shortName>
    </recommendedName>
    <alternativeName>
        <fullName evidence="1">Excinuclease ABC subunit B</fullName>
    </alternativeName>
</protein>
<name>UVRB_NATTJ</name>
<organism>
    <name type="scientific">Natranaerobius thermophilus (strain ATCC BAA-1301 / DSM 18059 / JW/NM-WN-LF)</name>
    <dbReference type="NCBI Taxonomy" id="457570"/>
    <lineage>
        <taxon>Bacteria</taxon>
        <taxon>Bacillati</taxon>
        <taxon>Bacillota</taxon>
        <taxon>Clostridia</taxon>
        <taxon>Natranaerobiales</taxon>
        <taxon>Natranaerobiaceae</taxon>
        <taxon>Natranaerobius</taxon>
    </lineage>
</organism>
<dbReference type="EMBL" id="CP001034">
    <property type="protein sequence ID" value="ACB85604.1"/>
    <property type="molecule type" value="Genomic_DNA"/>
</dbReference>
<dbReference type="RefSeq" id="WP_012448461.1">
    <property type="nucleotide sequence ID" value="NC_010718.1"/>
</dbReference>
<dbReference type="SMR" id="B2A713"/>
<dbReference type="FunCoup" id="B2A713">
    <property type="interactions" value="307"/>
</dbReference>
<dbReference type="STRING" id="457570.Nther_2037"/>
<dbReference type="KEGG" id="nth:Nther_2037"/>
<dbReference type="eggNOG" id="COG0556">
    <property type="taxonomic scope" value="Bacteria"/>
</dbReference>
<dbReference type="HOGENOM" id="CLU_009621_2_1_9"/>
<dbReference type="InParanoid" id="B2A713"/>
<dbReference type="OrthoDB" id="9806651at2"/>
<dbReference type="Proteomes" id="UP000001683">
    <property type="component" value="Chromosome"/>
</dbReference>
<dbReference type="GO" id="GO:0005737">
    <property type="term" value="C:cytoplasm"/>
    <property type="evidence" value="ECO:0007669"/>
    <property type="project" value="UniProtKB-SubCell"/>
</dbReference>
<dbReference type="GO" id="GO:0009380">
    <property type="term" value="C:excinuclease repair complex"/>
    <property type="evidence" value="ECO:0007669"/>
    <property type="project" value="InterPro"/>
</dbReference>
<dbReference type="GO" id="GO:0005524">
    <property type="term" value="F:ATP binding"/>
    <property type="evidence" value="ECO:0007669"/>
    <property type="project" value="UniProtKB-UniRule"/>
</dbReference>
<dbReference type="GO" id="GO:0016887">
    <property type="term" value="F:ATP hydrolysis activity"/>
    <property type="evidence" value="ECO:0007669"/>
    <property type="project" value="InterPro"/>
</dbReference>
<dbReference type="GO" id="GO:0003677">
    <property type="term" value="F:DNA binding"/>
    <property type="evidence" value="ECO:0007669"/>
    <property type="project" value="UniProtKB-UniRule"/>
</dbReference>
<dbReference type="GO" id="GO:0009381">
    <property type="term" value="F:excinuclease ABC activity"/>
    <property type="evidence" value="ECO:0007669"/>
    <property type="project" value="UniProtKB-UniRule"/>
</dbReference>
<dbReference type="GO" id="GO:0004386">
    <property type="term" value="F:helicase activity"/>
    <property type="evidence" value="ECO:0007669"/>
    <property type="project" value="UniProtKB-KW"/>
</dbReference>
<dbReference type="GO" id="GO:0006289">
    <property type="term" value="P:nucleotide-excision repair"/>
    <property type="evidence" value="ECO:0007669"/>
    <property type="project" value="UniProtKB-UniRule"/>
</dbReference>
<dbReference type="GO" id="GO:0009432">
    <property type="term" value="P:SOS response"/>
    <property type="evidence" value="ECO:0007669"/>
    <property type="project" value="UniProtKB-UniRule"/>
</dbReference>
<dbReference type="CDD" id="cd17916">
    <property type="entry name" value="DEXHc_UvrB"/>
    <property type="match status" value="1"/>
</dbReference>
<dbReference type="CDD" id="cd18790">
    <property type="entry name" value="SF2_C_UvrB"/>
    <property type="match status" value="1"/>
</dbReference>
<dbReference type="Gene3D" id="3.40.50.300">
    <property type="entry name" value="P-loop containing nucleotide triphosphate hydrolases"/>
    <property type="match status" value="3"/>
</dbReference>
<dbReference type="Gene3D" id="4.10.860.10">
    <property type="entry name" value="UVR domain"/>
    <property type="match status" value="1"/>
</dbReference>
<dbReference type="HAMAP" id="MF_00204">
    <property type="entry name" value="UvrB"/>
    <property type="match status" value="1"/>
</dbReference>
<dbReference type="InterPro" id="IPR006935">
    <property type="entry name" value="Helicase/UvrB_N"/>
</dbReference>
<dbReference type="InterPro" id="IPR014001">
    <property type="entry name" value="Helicase_ATP-bd"/>
</dbReference>
<dbReference type="InterPro" id="IPR001650">
    <property type="entry name" value="Helicase_C-like"/>
</dbReference>
<dbReference type="InterPro" id="IPR027417">
    <property type="entry name" value="P-loop_NTPase"/>
</dbReference>
<dbReference type="InterPro" id="IPR001943">
    <property type="entry name" value="UVR_dom"/>
</dbReference>
<dbReference type="InterPro" id="IPR036876">
    <property type="entry name" value="UVR_dom_sf"/>
</dbReference>
<dbReference type="InterPro" id="IPR004807">
    <property type="entry name" value="UvrB"/>
</dbReference>
<dbReference type="InterPro" id="IPR041471">
    <property type="entry name" value="UvrB_inter"/>
</dbReference>
<dbReference type="InterPro" id="IPR024759">
    <property type="entry name" value="UvrB_YAD/RRR_dom"/>
</dbReference>
<dbReference type="NCBIfam" id="NF003673">
    <property type="entry name" value="PRK05298.1"/>
    <property type="match status" value="1"/>
</dbReference>
<dbReference type="NCBIfam" id="TIGR00631">
    <property type="entry name" value="uvrb"/>
    <property type="match status" value="1"/>
</dbReference>
<dbReference type="PANTHER" id="PTHR24029">
    <property type="entry name" value="UVRABC SYSTEM PROTEIN B"/>
    <property type="match status" value="1"/>
</dbReference>
<dbReference type="PANTHER" id="PTHR24029:SF0">
    <property type="entry name" value="UVRABC SYSTEM PROTEIN B"/>
    <property type="match status" value="1"/>
</dbReference>
<dbReference type="Pfam" id="PF00271">
    <property type="entry name" value="Helicase_C"/>
    <property type="match status" value="1"/>
</dbReference>
<dbReference type="Pfam" id="PF04851">
    <property type="entry name" value="ResIII"/>
    <property type="match status" value="1"/>
</dbReference>
<dbReference type="Pfam" id="PF02151">
    <property type="entry name" value="UVR"/>
    <property type="match status" value="1"/>
</dbReference>
<dbReference type="Pfam" id="PF12344">
    <property type="entry name" value="UvrB"/>
    <property type="match status" value="1"/>
</dbReference>
<dbReference type="Pfam" id="PF17757">
    <property type="entry name" value="UvrB_inter"/>
    <property type="match status" value="1"/>
</dbReference>
<dbReference type="SMART" id="SM00487">
    <property type="entry name" value="DEXDc"/>
    <property type="match status" value="1"/>
</dbReference>
<dbReference type="SMART" id="SM00490">
    <property type="entry name" value="HELICc"/>
    <property type="match status" value="1"/>
</dbReference>
<dbReference type="SUPFAM" id="SSF46600">
    <property type="entry name" value="C-terminal UvrC-binding domain of UvrB"/>
    <property type="match status" value="1"/>
</dbReference>
<dbReference type="SUPFAM" id="SSF52540">
    <property type="entry name" value="P-loop containing nucleoside triphosphate hydrolases"/>
    <property type="match status" value="2"/>
</dbReference>
<dbReference type="PROSITE" id="PS51192">
    <property type="entry name" value="HELICASE_ATP_BIND_1"/>
    <property type="match status" value="1"/>
</dbReference>
<dbReference type="PROSITE" id="PS51194">
    <property type="entry name" value="HELICASE_CTER"/>
    <property type="match status" value="1"/>
</dbReference>
<dbReference type="PROSITE" id="PS50151">
    <property type="entry name" value="UVR"/>
    <property type="match status" value="1"/>
</dbReference>
<gene>
    <name evidence="1" type="primary">uvrB</name>
    <name type="ordered locus">Nther_2037</name>
</gene>